<sequence length="317" mass="34734">MAAAAAATEQQSSNGPVKKSMREKAVERRNVNKEHNSNFKAGYIPIDEDRLHKTGLRGRKGNLAICVIVLLFILAVINLIITLVIWAVIRIGPNGCDSMEFHESGLLRFKQVSDMGVIHPLYKSTVGGRRNENLVITGNNQPIVFQQGTTKLSVGKNKTSITSDTGMQFFDPRTQNILFSTDYETHEFHLPSGVKSLNVQKASTERITSNATSDLNIKVGGRAIVRGNEGVFIMGKTIQFHMGGNMELKAENSIILNGTVMVSTNRLPSSSSGDQFGGDDWVRYKLCMCADGTLFRVQVTGQNMGCQTSDNPCGDLY</sequence>
<keyword id="KW-1003">Cell membrane</keyword>
<keyword id="KW-0963">Cytoplasm</keyword>
<keyword id="KW-0206">Cytoskeleton</keyword>
<keyword id="KW-1015">Disulfide bond</keyword>
<keyword id="KW-0325">Glycoprotein</keyword>
<keyword id="KW-0472">Membrane</keyword>
<keyword id="KW-1185">Reference proteome</keyword>
<keyword id="KW-0735">Signal-anchor</keyword>
<keyword id="KW-0812">Transmembrane</keyword>
<keyword id="KW-1133">Transmembrane helix</keyword>
<organism>
    <name type="scientific">Bos taurus</name>
    <name type="common">Bovine</name>
    <dbReference type="NCBI Taxonomy" id="9913"/>
    <lineage>
        <taxon>Eukaryota</taxon>
        <taxon>Metazoa</taxon>
        <taxon>Chordata</taxon>
        <taxon>Craniata</taxon>
        <taxon>Vertebrata</taxon>
        <taxon>Euteleostomi</taxon>
        <taxon>Mammalia</taxon>
        <taxon>Eutheria</taxon>
        <taxon>Laurasiatheria</taxon>
        <taxon>Artiodactyla</taxon>
        <taxon>Ruminantia</taxon>
        <taxon>Pecora</taxon>
        <taxon>Bovidae</taxon>
        <taxon>Bovinae</taxon>
        <taxon>Bos</taxon>
    </lineage>
</organism>
<comment type="function">
    <text evidence="1">Component of the sarcoglycan complex, a subcomplex of the dystrophin-glycoprotein complex which forms a link between the F-actin cytoskeleton and the extracellular matrix.</text>
</comment>
<comment type="subunit">
    <text evidence="1">Cross-link to form 2 major subcomplexes: one consisting of SGCB, SGCD and SGCG and the other consisting of SGCB and SGCD. The association between SGCB and SGCG is particularly strong while SGCA is loosely associated with the other sarcoglycans (By similarity).</text>
</comment>
<comment type="subcellular location">
    <subcellularLocation>
        <location evidence="1">Cell membrane</location>
        <location evidence="1">Sarcolemma</location>
        <topology evidence="1">Single-pass type II membrane protein</topology>
    </subcellularLocation>
    <subcellularLocation>
        <location evidence="1">Cytoplasm</location>
        <location evidence="1">Cytoskeleton</location>
    </subcellularLocation>
</comment>
<comment type="PTM">
    <text evidence="1">Disulfide bonds are present.</text>
</comment>
<comment type="similarity">
    <text evidence="4">Belongs to the sarcoglycan beta/delta/gamma/zeta family.</text>
</comment>
<gene>
    <name type="primary">SGCB</name>
</gene>
<protein>
    <recommendedName>
        <fullName>Beta-sarcoglycan</fullName>
        <shortName>Beta-SG</shortName>
    </recommendedName>
</protein>
<name>SGCB_BOVIN</name>
<dbReference type="EMBL" id="BC149178">
    <property type="protein sequence ID" value="AAI49179.1"/>
    <property type="molecule type" value="mRNA"/>
</dbReference>
<dbReference type="RefSeq" id="NP_001095658.1">
    <property type="nucleotide sequence ID" value="NM_001102188.1"/>
</dbReference>
<dbReference type="SMR" id="A6QP70"/>
<dbReference type="FunCoup" id="A6QP70">
    <property type="interactions" value="990"/>
</dbReference>
<dbReference type="STRING" id="9913.ENSBTAP00000062002"/>
<dbReference type="GlyCosmos" id="A6QP70">
    <property type="glycosylation" value="3 sites, No reported glycans"/>
</dbReference>
<dbReference type="GlyGen" id="A6QP70">
    <property type="glycosylation" value="3 sites"/>
</dbReference>
<dbReference type="PaxDb" id="9913-ENSBTAP00000052639"/>
<dbReference type="GeneID" id="535372"/>
<dbReference type="KEGG" id="bta:535372"/>
<dbReference type="CTD" id="6443"/>
<dbReference type="VEuPathDB" id="HostDB:ENSBTAG00000014601"/>
<dbReference type="eggNOG" id="ENOG502QUW4">
    <property type="taxonomic scope" value="Eukaryota"/>
</dbReference>
<dbReference type="HOGENOM" id="CLU_066515_1_0_1"/>
<dbReference type="InParanoid" id="A6QP70"/>
<dbReference type="OrthoDB" id="5843723at2759"/>
<dbReference type="TreeFam" id="TF313538"/>
<dbReference type="Reactome" id="R-BTA-9913351">
    <property type="pathway name" value="Formation of the dystrophin-glycoprotein complex (DGC)"/>
</dbReference>
<dbReference type="Proteomes" id="UP000009136">
    <property type="component" value="Chromosome 6"/>
</dbReference>
<dbReference type="Bgee" id="ENSBTAG00000014601">
    <property type="expression patterns" value="Expressed in cardiac ventricle and 102 other cell types or tissues"/>
</dbReference>
<dbReference type="GO" id="GO:0005737">
    <property type="term" value="C:cytoplasm"/>
    <property type="evidence" value="ECO:0007669"/>
    <property type="project" value="UniProtKB-KW"/>
</dbReference>
<dbReference type="GO" id="GO:0005856">
    <property type="term" value="C:cytoskeleton"/>
    <property type="evidence" value="ECO:0007669"/>
    <property type="project" value="UniProtKB-SubCell"/>
</dbReference>
<dbReference type="GO" id="GO:0016012">
    <property type="term" value="C:sarcoglycan complex"/>
    <property type="evidence" value="ECO:0000318"/>
    <property type="project" value="GO_Central"/>
</dbReference>
<dbReference type="GO" id="GO:0042383">
    <property type="term" value="C:sarcolemma"/>
    <property type="evidence" value="ECO:0000318"/>
    <property type="project" value="GO_Central"/>
</dbReference>
<dbReference type="GO" id="GO:0007517">
    <property type="term" value="P:muscle organ development"/>
    <property type="evidence" value="ECO:0007669"/>
    <property type="project" value="InterPro"/>
</dbReference>
<dbReference type="InterPro" id="IPR006875">
    <property type="entry name" value="Sarcoglycan"/>
</dbReference>
<dbReference type="InterPro" id="IPR027659">
    <property type="entry name" value="Sgcb"/>
</dbReference>
<dbReference type="PANTHER" id="PTHR21142:SF2">
    <property type="entry name" value="BETA-SARCOGLYCAN"/>
    <property type="match status" value="1"/>
</dbReference>
<dbReference type="PANTHER" id="PTHR21142">
    <property type="entry name" value="SARCOGLYCANS"/>
    <property type="match status" value="1"/>
</dbReference>
<dbReference type="Pfam" id="PF04790">
    <property type="entry name" value="Sarcoglycan_1"/>
    <property type="match status" value="1"/>
</dbReference>
<evidence type="ECO:0000250" key="1"/>
<evidence type="ECO:0000255" key="2"/>
<evidence type="ECO:0000256" key="3">
    <source>
        <dbReference type="SAM" id="MobiDB-lite"/>
    </source>
</evidence>
<evidence type="ECO:0000305" key="4"/>
<reference key="1">
    <citation type="submission" date="2007-07" db="EMBL/GenBank/DDBJ databases">
        <authorList>
            <consortium name="NIH - Mammalian Gene Collection (MGC) project"/>
        </authorList>
    </citation>
    <scope>NUCLEOTIDE SEQUENCE [LARGE SCALE MRNA]</scope>
    <source>
        <strain>Hereford</strain>
        <tissue>Fetal muscle</tissue>
    </source>
</reference>
<proteinExistence type="evidence at transcript level"/>
<feature type="chain" id="PRO_0000326142" description="Beta-sarcoglycan">
    <location>
        <begin position="1"/>
        <end position="317"/>
    </location>
</feature>
<feature type="topological domain" description="Cytoplasmic" evidence="2">
    <location>
        <begin position="1"/>
        <end position="64"/>
    </location>
</feature>
<feature type="transmembrane region" description="Helical; Signal-anchor for type II membrane protein" evidence="2">
    <location>
        <begin position="65"/>
        <end position="85"/>
    </location>
</feature>
<feature type="topological domain" description="Extracellular" evidence="2">
    <location>
        <begin position="86"/>
        <end position="317"/>
    </location>
</feature>
<feature type="region of interest" description="Disordered" evidence="3">
    <location>
        <begin position="1"/>
        <end position="31"/>
    </location>
</feature>
<feature type="compositionally biased region" description="Basic and acidic residues" evidence="3">
    <location>
        <begin position="20"/>
        <end position="31"/>
    </location>
</feature>
<feature type="glycosylation site" description="N-linked (GlcNAc...) asparagine" evidence="2">
    <location>
        <position position="157"/>
    </location>
</feature>
<feature type="glycosylation site" description="N-linked (GlcNAc...) asparagine" evidence="2">
    <location>
        <position position="210"/>
    </location>
</feature>
<feature type="glycosylation site" description="N-linked (GlcNAc...) asparagine" evidence="2">
    <location>
        <position position="257"/>
    </location>
</feature>
<feature type="disulfide bond" evidence="2">
    <location>
        <begin position="287"/>
        <end position="313"/>
    </location>
</feature>
<feature type="disulfide bond" evidence="2">
    <location>
        <begin position="289"/>
        <end position="306"/>
    </location>
</feature>
<accession>A6QP70</accession>